<keyword id="KW-0687">Ribonucleoprotein</keyword>
<keyword id="KW-0689">Ribosomal protein</keyword>
<sequence length="132" mass="14904">MAPAKEIWAVGRRKTSVARAKIKEGSGKITVNHKDIKDYLQNRKAIIEEAIRPLSLLNVQDKYDLNLNVTGGGTTGQVGAIRHALARAICRIKPEFRPAVKKEGFLTRDPRMVERKKYGLHKARRGTQFSKR</sequence>
<gene>
    <name evidence="1" type="primary">rpsI</name>
    <name type="ordered locus">LIC_10762</name>
</gene>
<reference key="1">
    <citation type="journal article" date="2004" name="J. Bacteriol.">
        <title>Comparative genomics of two Leptospira interrogans serovars reveals novel insights into physiology and pathogenesis.</title>
        <authorList>
            <person name="Nascimento A.L.T.O."/>
            <person name="Ko A.I."/>
            <person name="Martins E.A.L."/>
            <person name="Monteiro-Vitorello C.B."/>
            <person name="Ho P.L."/>
            <person name="Haake D.A."/>
            <person name="Verjovski-Almeida S."/>
            <person name="Hartskeerl R.A."/>
            <person name="Marques M.V."/>
            <person name="Oliveira M.C."/>
            <person name="Menck C.F.M."/>
            <person name="Leite L.C.C."/>
            <person name="Carrer H."/>
            <person name="Coutinho L.L."/>
            <person name="Degrave W.M."/>
            <person name="Dellagostin O.A."/>
            <person name="El-Dorry H."/>
            <person name="Ferro E.S."/>
            <person name="Ferro M.I.T."/>
            <person name="Furlan L.R."/>
            <person name="Gamberini M."/>
            <person name="Giglioti E.A."/>
            <person name="Goes-Neto A."/>
            <person name="Goldman G.H."/>
            <person name="Goldman M.H.S."/>
            <person name="Harakava R."/>
            <person name="Jeronimo S.M.B."/>
            <person name="Junqueira-de-Azevedo I.L.M."/>
            <person name="Kimura E.T."/>
            <person name="Kuramae E.E."/>
            <person name="Lemos E.G.M."/>
            <person name="Lemos M.V.F."/>
            <person name="Marino C.L."/>
            <person name="Nunes L.R."/>
            <person name="de Oliveira R.C."/>
            <person name="Pereira G.G."/>
            <person name="Reis M.S."/>
            <person name="Schriefer A."/>
            <person name="Siqueira W.J."/>
            <person name="Sommer P."/>
            <person name="Tsai S.M."/>
            <person name="Simpson A.J.G."/>
            <person name="Ferro J.A."/>
            <person name="Camargo L.E.A."/>
            <person name="Kitajima J.P."/>
            <person name="Setubal J.C."/>
            <person name="Van Sluys M.A."/>
        </authorList>
    </citation>
    <scope>NUCLEOTIDE SEQUENCE [LARGE SCALE GENOMIC DNA]</scope>
    <source>
        <strain>Fiocruz L1-130</strain>
    </source>
</reference>
<comment type="similarity">
    <text evidence="1">Belongs to the universal ribosomal protein uS9 family.</text>
</comment>
<comment type="sequence caution" evidence="2">
    <conflict type="erroneous initiation">
        <sequence resource="EMBL-CDS" id="AAS69379"/>
    </conflict>
    <text>Extended N-terminus.</text>
</comment>
<proteinExistence type="inferred from homology"/>
<organism>
    <name type="scientific">Leptospira interrogans serogroup Icterohaemorrhagiae serovar copenhageni (strain Fiocruz L1-130)</name>
    <dbReference type="NCBI Taxonomy" id="267671"/>
    <lineage>
        <taxon>Bacteria</taxon>
        <taxon>Pseudomonadati</taxon>
        <taxon>Spirochaetota</taxon>
        <taxon>Spirochaetia</taxon>
        <taxon>Leptospirales</taxon>
        <taxon>Leptospiraceae</taxon>
        <taxon>Leptospira</taxon>
    </lineage>
</organism>
<protein>
    <recommendedName>
        <fullName evidence="1">Small ribosomal subunit protein uS9</fullName>
    </recommendedName>
    <alternativeName>
        <fullName evidence="2">30S ribosomal protein S9</fullName>
    </alternativeName>
</protein>
<feature type="chain" id="PRO_0000111368" description="Small ribosomal subunit protein uS9">
    <location>
        <begin position="1"/>
        <end position="132"/>
    </location>
</feature>
<name>RS9_LEPIC</name>
<accession>Q72U99</accession>
<evidence type="ECO:0000255" key="1">
    <source>
        <dbReference type="HAMAP-Rule" id="MF_00532"/>
    </source>
</evidence>
<evidence type="ECO:0000305" key="2"/>
<dbReference type="EMBL" id="AE016823">
    <property type="protein sequence ID" value="AAS69379.1"/>
    <property type="status" value="ALT_INIT"/>
    <property type="molecule type" value="Genomic_DNA"/>
</dbReference>
<dbReference type="RefSeq" id="WP_001966744.1">
    <property type="nucleotide sequence ID" value="NC_005823.1"/>
</dbReference>
<dbReference type="SMR" id="Q72U99"/>
<dbReference type="GeneID" id="61144103"/>
<dbReference type="KEGG" id="lic:LIC_10762"/>
<dbReference type="HOGENOM" id="CLU_046483_2_1_12"/>
<dbReference type="Proteomes" id="UP000007037">
    <property type="component" value="Chromosome I"/>
</dbReference>
<dbReference type="GO" id="GO:0022627">
    <property type="term" value="C:cytosolic small ribosomal subunit"/>
    <property type="evidence" value="ECO:0007669"/>
    <property type="project" value="TreeGrafter"/>
</dbReference>
<dbReference type="GO" id="GO:0003723">
    <property type="term" value="F:RNA binding"/>
    <property type="evidence" value="ECO:0007669"/>
    <property type="project" value="TreeGrafter"/>
</dbReference>
<dbReference type="GO" id="GO:0003735">
    <property type="term" value="F:structural constituent of ribosome"/>
    <property type="evidence" value="ECO:0007669"/>
    <property type="project" value="InterPro"/>
</dbReference>
<dbReference type="GO" id="GO:0006412">
    <property type="term" value="P:translation"/>
    <property type="evidence" value="ECO:0007669"/>
    <property type="project" value="UniProtKB-UniRule"/>
</dbReference>
<dbReference type="FunFam" id="3.30.230.10:FF:000001">
    <property type="entry name" value="30S ribosomal protein S9"/>
    <property type="match status" value="1"/>
</dbReference>
<dbReference type="Gene3D" id="3.30.230.10">
    <property type="match status" value="1"/>
</dbReference>
<dbReference type="HAMAP" id="MF_00532_B">
    <property type="entry name" value="Ribosomal_uS9_B"/>
    <property type="match status" value="1"/>
</dbReference>
<dbReference type="InterPro" id="IPR020568">
    <property type="entry name" value="Ribosomal_Su5_D2-typ_SF"/>
</dbReference>
<dbReference type="InterPro" id="IPR000754">
    <property type="entry name" value="Ribosomal_uS9"/>
</dbReference>
<dbReference type="InterPro" id="IPR023035">
    <property type="entry name" value="Ribosomal_uS9_bac/plastid"/>
</dbReference>
<dbReference type="InterPro" id="IPR020574">
    <property type="entry name" value="Ribosomal_uS9_CS"/>
</dbReference>
<dbReference type="InterPro" id="IPR014721">
    <property type="entry name" value="Ribsml_uS5_D2-typ_fold_subgr"/>
</dbReference>
<dbReference type="NCBIfam" id="NF001099">
    <property type="entry name" value="PRK00132.1"/>
    <property type="match status" value="1"/>
</dbReference>
<dbReference type="PANTHER" id="PTHR21569">
    <property type="entry name" value="RIBOSOMAL PROTEIN S9"/>
    <property type="match status" value="1"/>
</dbReference>
<dbReference type="PANTHER" id="PTHR21569:SF1">
    <property type="entry name" value="SMALL RIBOSOMAL SUBUNIT PROTEIN US9M"/>
    <property type="match status" value="1"/>
</dbReference>
<dbReference type="Pfam" id="PF00380">
    <property type="entry name" value="Ribosomal_S9"/>
    <property type="match status" value="1"/>
</dbReference>
<dbReference type="SUPFAM" id="SSF54211">
    <property type="entry name" value="Ribosomal protein S5 domain 2-like"/>
    <property type="match status" value="1"/>
</dbReference>
<dbReference type="PROSITE" id="PS00360">
    <property type="entry name" value="RIBOSOMAL_S9"/>
    <property type="match status" value="1"/>
</dbReference>